<feature type="chain" id="PRO_0000373692" description="Putative RNA-ligase">
    <location>
        <begin position="1"/>
        <end position="446"/>
    </location>
</feature>
<reference key="1">
    <citation type="submission" date="2003-03" db="EMBL/GenBank/DDBJ databases">
        <title>African swine fever virus genomes.</title>
        <authorList>
            <person name="Kutish G.F."/>
            <person name="Rock D.L."/>
        </authorList>
    </citation>
    <scope>NUCLEOTIDE SEQUENCE [LARGE SCALE GENOMIC DNA]</scope>
</reference>
<dbReference type="EMBL" id="AY261361">
    <property type="status" value="NOT_ANNOTATED_CDS"/>
    <property type="molecule type" value="Genomic_DNA"/>
</dbReference>
<dbReference type="Proteomes" id="UP000000860">
    <property type="component" value="Segment"/>
</dbReference>
<dbReference type="GO" id="GO:0044423">
    <property type="term" value="C:virion component"/>
    <property type="evidence" value="ECO:0007669"/>
    <property type="project" value="UniProtKB-KW"/>
</dbReference>
<name>VF448_ASFM2</name>
<organism>
    <name type="scientific">African swine fever virus (isolate Tick/Malawi/Lil 20-1/1983)</name>
    <name type="common">ASFV</name>
    <dbReference type="NCBI Taxonomy" id="10500"/>
    <lineage>
        <taxon>Viruses</taxon>
        <taxon>Varidnaviria</taxon>
        <taxon>Bamfordvirae</taxon>
        <taxon>Nucleocytoviricota</taxon>
        <taxon>Pokkesviricetes</taxon>
        <taxon>Asfuvirales</taxon>
        <taxon>Asfarviridae</taxon>
        <taxon>Asfivirus</taxon>
        <taxon>African swine fever virus</taxon>
    </lineage>
</organism>
<evidence type="ECO:0000250" key="1">
    <source>
        <dbReference type="UniProtKB" id="Q65153"/>
    </source>
</evidence>
<evidence type="ECO:0000305" key="2"/>
<sequence length="446" mass="51958">MSNESFPETLENLLSTLQTKQQNAIQSEVIEWLHSFCETFHLKIHCHKQFIPSGEKKWAKIPTQETQENTQPHVQRVVLSRAQPLKVQESLLTTMCNGLVLDANTWTCLAVPPPAPFQQVTRQIQHYYRNNFYEVVPIQDGTLLTIYYWDDPEHGPSWCLASTHGYDVSNYCWIGDKTFAELVYELLQQHSTCDVTLEKKQTRGTRLFFNNLNRDYCYTIGIRHHNLQPLIYDPQNIWAIQTTNLKTLKTVYPEYHGYVGIPGIQSQVPELPQYELPYLIRSYKTAMNQAKNAIKNGKKDKGYFNYGYLLVSRAPAITKSISTVLLKSPLLVFLQKSVYQKKHNLTSSLRLEFIILQNYLMQHFRDNFIALFPQYISYYTKYQNMLNMIIHSIAIKDIDHPFAGTVVKKVLEDIENAENIIDHTTIQNYVHQSKYAMLYLSIISHF</sequence>
<gene>
    <name type="ordered locus">Mal-069</name>
</gene>
<protein>
    <recommendedName>
        <fullName evidence="1">Putative RNA-ligase</fullName>
        <shortName>pM448R</shortName>
    </recommendedName>
</protein>
<comment type="subcellular location">
    <subcellularLocation>
        <location evidence="1">Virion</location>
    </subcellularLocation>
</comment>
<comment type="induction">
    <text evidence="2">Expressed in the early phase of the viral replicative cycle.</text>
</comment>
<comment type="similarity">
    <text evidence="2">Belongs to the asfivirus M448R family.</text>
</comment>
<proteinExistence type="inferred from homology"/>
<accession>P0CAH4</accession>
<organismHost>
    <name type="scientific">Ornithodoros</name>
    <name type="common">relapsing fever ticks</name>
    <dbReference type="NCBI Taxonomy" id="6937"/>
</organismHost>
<organismHost>
    <name type="scientific">Phacochoerus aethiopicus</name>
    <name type="common">Warthog</name>
    <dbReference type="NCBI Taxonomy" id="85517"/>
</organismHost>
<organismHost>
    <name type="scientific">Phacochoerus africanus</name>
    <name type="common">Warthog</name>
    <dbReference type="NCBI Taxonomy" id="41426"/>
</organismHost>
<organismHost>
    <name type="scientific">Potamochoerus larvatus</name>
    <name type="common">Bushpig</name>
    <dbReference type="NCBI Taxonomy" id="273792"/>
</organismHost>
<organismHost>
    <name type="scientific">Sus scrofa</name>
    <name type="common">Pig</name>
    <dbReference type="NCBI Taxonomy" id="9823"/>
</organismHost>
<keyword id="KW-0244">Early protein</keyword>
<keyword id="KW-0946">Virion</keyword>